<dbReference type="EC" id="6.3.5.3" evidence="1"/>
<dbReference type="EC" id="3.5.1.2" evidence="1"/>
<dbReference type="EMBL" id="AE016822">
    <property type="protein sequence ID" value="AAT89959.1"/>
    <property type="molecule type" value="Genomic_DNA"/>
</dbReference>
<dbReference type="RefSeq" id="WP_011186938.1">
    <property type="nucleotide sequence ID" value="NC_006087.1"/>
</dbReference>
<dbReference type="SMR" id="Q6ACD4"/>
<dbReference type="STRING" id="281090.Lxx22970"/>
<dbReference type="KEGG" id="lxx:Lxx22970"/>
<dbReference type="eggNOG" id="COG0047">
    <property type="taxonomic scope" value="Bacteria"/>
</dbReference>
<dbReference type="HOGENOM" id="CLU_001031_3_1_11"/>
<dbReference type="UniPathway" id="UPA00074">
    <property type="reaction ID" value="UER00128"/>
</dbReference>
<dbReference type="Proteomes" id="UP000001306">
    <property type="component" value="Chromosome"/>
</dbReference>
<dbReference type="GO" id="GO:0005737">
    <property type="term" value="C:cytoplasm"/>
    <property type="evidence" value="ECO:0007669"/>
    <property type="project" value="UniProtKB-SubCell"/>
</dbReference>
<dbReference type="GO" id="GO:0005524">
    <property type="term" value="F:ATP binding"/>
    <property type="evidence" value="ECO:0007669"/>
    <property type="project" value="UniProtKB-KW"/>
</dbReference>
<dbReference type="GO" id="GO:0004359">
    <property type="term" value="F:glutaminase activity"/>
    <property type="evidence" value="ECO:0007669"/>
    <property type="project" value="UniProtKB-EC"/>
</dbReference>
<dbReference type="GO" id="GO:0004642">
    <property type="term" value="F:phosphoribosylformylglycinamidine synthase activity"/>
    <property type="evidence" value="ECO:0007669"/>
    <property type="project" value="UniProtKB-UniRule"/>
</dbReference>
<dbReference type="GO" id="GO:0006189">
    <property type="term" value="P:'de novo' IMP biosynthetic process"/>
    <property type="evidence" value="ECO:0007669"/>
    <property type="project" value="UniProtKB-UniRule"/>
</dbReference>
<dbReference type="CDD" id="cd01740">
    <property type="entry name" value="GATase1_FGAR_AT"/>
    <property type="match status" value="1"/>
</dbReference>
<dbReference type="Gene3D" id="3.40.50.880">
    <property type="match status" value="1"/>
</dbReference>
<dbReference type="HAMAP" id="MF_00421">
    <property type="entry name" value="PurQ"/>
    <property type="match status" value="1"/>
</dbReference>
<dbReference type="InterPro" id="IPR029062">
    <property type="entry name" value="Class_I_gatase-like"/>
</dbReference>
<dbReference type="InterPro" id="IPR010075">
    <property type="entry name" value="PRibForGlyAmidine_synth_PurQ"/>
</dbReference>
<dbReference type="NCBIfam" id="TIGR01737">
    <property type="entry name" value="FGAM_synth_I"/>
    <property type="match status" value="1"/>
</dbReference>
<dbReference type="NCBIfam" id="NF002957">
    <property type="entry name" value="PRK03619.1"/>
    <property type="match status" value="1"/>
</dbReference>
<dbReference type="PANTHER" id="PTHR47552">
    <property type="entry name" value="PHOSPHORIBOSYLFORMYLGLYCINAMIDINE SYNTHASE SUBUNIT PURQ"/>
    <property type="match status" value="1"/>
</dbReference>
<dbReference type="PANTHER" id="PTHR47552:SF1">
    <property type="entry name" value="PHOSPHORIBOSYLFORMYLGLYCINAMIDINE SYNTHASE SUBUNIT PURQ"/>
    <property type="match status" value="1"/>
</dbReference>
<dbReference type="Pfam" id="PF13507">
    <property type="entry name" value="GATase_5"/>
    <property type="match status" value="1"/>
</dbReference>
<dbReference type="PIRSF" id="PIRSF001586">
    <property type="entry name" value="FGAM_synth_I"/>
    <property type="match status" value="1"/>
</dbReference>
<dbReference type="SMART" id="SM01211">
    <property type="entry name" value="GATase_5"/>
    <property type="match status" value="1"/>
</dbReference>
<dbReference type="SUPFAM" id="SSF52317">
    <property type="entry name" value="Class I glutamine amidotransferase-like"/>
    <property type="match status" value="1"/>
</dbReference>
<dbReference type="PROSITE" id="PS51273">
    <property type="entry name" value="GATASE_TYPE_1"/>
    <property type="match status" value="1"/>
</dbReference>
<sequence>MRIGVITFPGSLDDRDALRAIRLAGAEPVALWHGDHDLQGVDALVLPGGFSYGDYLRCGAIASLSPIMSEVVEAAGKGMPVLGICNGFQMLAEAILVPGGLIRNDHGNFICHAQRLTVENAETPWTGGFERGQKIVIPLKNGEGSFIASAEELKRLEGEGMVVFRYRGVNPNGSLNDIAGVRNERGNVVGLMPHPEHAVEPGFGPDTDQAMRSGTDGLAFFTSVVRSTLVEA</sequence>
<feature type="chain" id="PRO_0000100563" description="Phosphoribosylformylglycinamidine synthase subunit PurQ">
    <location>
        <begin position="1"/>
        <end position="232"/>
    </location>
</feature>
<feature type="domain" description="Glutamine amidotransferase type-1" evidence="1">
    <location>
        <begin position="2"/>
        <end position="232"/>
    </location>
</feature>
<feature type="active site" description="Nucleophile" evidence="1">
    <location>
        <position position="85"/>
    </location>
</feature>
<feature type="active site" evidence="1">
    <location>
        <position position="194"/>
    </location>
</feature>
<feature type="active site" evidence="1">
    <location>
        <position position="196"/>
    </location>
</feature>
<keyword id="KW-0067">ATP-binding</keyword>
<keyword id="KW-0963">Cytoplasm</keyword>
<keyword id="KW-0315">Glutamine amidotransferase</keyword>
<keyword id="KW-0378">Hydrolase</keyword>
<keyword id="KW-0436">Ligase</keyword>
<keyword id="KW-0547">Nucleotide-binding</keyword>
<keyword id="KW-0658">Purine biosynthesis</keyword>
<keyword id="KW-1185">Reference proteome</keyword>
<gene>
    <name evidence="1" type="primary">purQ</name>
    <name type="ordered locus">Lxx22970</name>
</gene>
<name>PURQ_LEIXX</name>
<evidence type="ECO:0000255" key="1">
    <source>
        <dbReference type="HAMAP-Rule" id="MF_00421"/>
    </source>
</evidence>
<protein>
    <recommendedName>
        <fullName evidence="1">Phosphoribosylformylglycinamidine synthase subunit PurQ</fullName>
        <shortName evidence="1">FGAM synthase</shortName>
        <ecNumber evidence="1">6.3.5.3</ecNumber>
    </recommendedName>
    <alternativeName>
        <fullName evidence="1">Formylglycinamide ribonucleotide amidotransferase subunit I</fullName>
        <shortName evidence="1">FGAR amidotransferase I</shortName>
        <shortName evidence="1">FGAR-AT I</shortName>
    </alternativeName>
    <alternativeName>
        <fullName evidence="1">Glutaminase PurQ</fullName>
        <ecNumber evidence="1">3.5.1.2</ecNumber>
    </alternativeName>
    <alternativeName>
        <fullName evidence="1">Phosphoribosylformylglycinamidine synthase subunit I</fullName>
    </alternativeName>
</protein>
<organism>
    <name type="scientific">Leifsonia xyli subsp. xyli (strain CTCB07)</name>
    <dbReference type="NCBI Taxonomy" id="281090"/>
    <lineage>
        <taxon>Bacteria</taxon>
        <taxon>Bacillati</taxon>
        <taxon>Actinomycetota</taxon>
        <taxon>Actinomycetes</taxon>
        <taxon>Micrococcales</taxon>
        <taxon>Microbacteriaceae</taxon>
        <taxon>Leifsonia</taxon>
    </lineage>
</organism>
<comment type="function">
    <text evidence="1">Part of the phosphoribosylformylglycinamidine synthase complex involved in the purines biosynthetic pathway. Catalyzes the ATP-dependent conversion of formylglycinamide ribonucleotide (FGAR) and glutamine to yield formylglycinamidine ribonucleotide (FGAM) and glutamate. The FGAM synthase complex is composed of three subunits. PurQ produces an ammonia molecule by converting glutamine to glutamate. PurL transfers the ammonia molecule to FGAR to form FGAM in an ATP-dependent manner. PurS interacts with PurQ and PurL and is thought to assist in the transfer of the ammonia molecule from PurQ to PurL.</text>
</comment>
<comment type="catalytic activity">
    <reaction evidence="1">
        <text>N(2)-formyl-N(1)-(5-phospho-beta-D-ribosyl)glycinamide + L-glutamine + ATP + H2O = 2-formamido-N(1)-(5-O-phospho-beta-D-ribosyl)acetamidine + L-glutamate + ADP + phosphate + H(+)</text>
        <dbReference type="Rhea" id="RHEA:17129"/>
        <dbReference type="ChEBI" id="CHEBI:15377"/>
        <dbReference type="ChEBI" id="CHEBI:15378"/>
        <dbReference type="ChEBI" id="CHEBI:29985"/>
        <dbReference type="ChEBI" id="CHEBI:30616"/>
        <dbReference type="ChEBI" id="CHEBI:43474"/>
        <dbReference type="ChEBI" id="CHEBI:58359"/>
        <dbReference type="ChEBI" id="CHEBI:147286"/>
        <dbReference type="ChEBI" id="CHEBI:147287"/>
        <dbReference type="ChEBI" id="CHEBI:456216"/>
        <dbReference type="EC" id="6.3.5.3"/>
    </reaction>
</comment>
<comment type="catalytic activity">
    <reaction evidence="1">
        <text>L-glutamine + H2O = L-glutamate + NH4(+)</text>
        <dbReference type="Rhea" id="RHEA:15889"/>
        <dbReference type="ChEBI" id="CHEBI:15377"/>
        <dbReference type="ChEBI" id="CHEBI:28938"/>
        <dbReference type="ChEBI" id="CHEBI:29985"/>
        <dbReference type="ChEBI" id="CHEBI:58359"/>
        <dbReference type="EC" id="3.5.1.2"/>
    </reaction>
</comment>
<comment type="pathway">
    <text evidence="1">Purine metabolism; IMP biosynthesis via de novo pathway; 5-amino-1-(5-phospho-D-ribosyl)imidazole from N(2)-formyl-N(1)-(5-phospho-D-ribosyl)glycinamide: step 1/2.</text>
</comment>
<comment type="subunit">
    <text evidence="1">Part of the FGAM synthase complex composed of 1 PurL, 1 PurQ and 2 PurS subunits.</text>
</comment>
<comment type="subcellular location">
    <subcellularLocation>
        <location evidence="1">Cytoplasm</location>
    </subcellularLocation>
</comment>
<accession>Q6ACD4</accession>
<reference key="1">
    <citation type="journal article" date="2004" name="Mol. Plant Microbe Interact.">
        <title>The genome sequence of the Gram-positive sugarcane pathogen Leifsonia xyli subsp. xyli.</title>
        <authorList>
            <person name="Monteiro-Vitorello C.B."/>
            <person name="Camargo L.E.A."/>
            <person name="Van Sluys M.A."/>
            <person name="Kitajima J.P."/>
            <person name="Truffi D."/>
            <person name="do Amaral A.M."/>
            <person name="Harakava R."/>
            <person name="de Oliveira J.C.F."/>
            <person name="Wood D."/>
            <person name="de Oliveira M.C."/>
            <person name="Miyaki C.Y."/>
            <person name="Takita M.A."/>
            <person name="da Silva A.C.R."/>
            <person name="Furlan L.R."/>
            <person name="Carraro D.M."/>
            <person name="Camarotte G."/>
            <person name="Almeida N.F. Jr."/>
            <person name="Carrer H."/>
            <person name="Coutinho L.L."/>
            <person name="El-Dorry H.A."/>
            <person name="Ferro M.I.T."/>
            <person name="Gagliardi P.R."/>
            <person name="Giglioti E."/>
            <person name="Goldman M.H.S."/>
            <person name="Goldman G.H."/>
            <person name="Kimura E.T."/>
            <person name="Ferro E.S."/>
            <person name="Kuramae E.E."/>
            <person name="Lemos E.G.M."/>
            <person name="Lemos M.V.F."/>
            <person name="Mauro S.M.Z."/>
            <person name="Machado M.A."/>
            <person name="Marino C.L."/>
            <person name="Menck C.F."/>
            <person name="Nunes L.R."/>
            <person name="Oliveira R.C."/>
            <person name="Pereira G.G."/>
            <person name="Siqueira W."/>
            <person name="de Souza A.A."/>
            <person name="Tsai S.M."/>
            <person name="Zanca A.S."/>
            <person name="Simpson A.J.G."/>
            <person name="Brumbley S.M."/>
            <person name="Setubal J.C."/>
        </authorList>
    </citation>
    <scope>NUCLEOTIDE SEQUENCE [LARGE SCALE GENOMIC DNA]</scope>
    <source>
        <strain>CTCB07</strain>
    </source>
</reference>
<proteinExistence type="inferred from homology"/>